<feature type="chain" id="PRO_0000114249" description="Chromosomal replication initiator protein DnaA">
    <location>
        <begin position="1"/>
        <end position="466"/>
    </location>
</feature>
<feature type="region of interest" description="Domain I, interacts with DnaA modulators" evidence="1">
    <location>
        <begin position="1"/>
        <end position="86"/>
    </location>
</feature>
<feature type="region of interest" description="Domain II" evidence="1">
    <location>
        <begin position="86"/>
        <end position="129"/>
    </location>
</feature>
<feature type="region of interest" description="Domain III, AAA+ region" evidence="1">
    <location>
        <begin position="130"/>
        <end position="346"/>
    </location>
</feature>
<feature type="region of interest" description="Domain IV, binds dsDNA" evidence="1">
    <location>
        <begin position="347"/>
        <end position="466"/>
    </location>
</feature>
<feature type="binding site" evidence="1">
    <location>
        <position position="174"/>
    </location>
    <ligand>
        <name>ATP</name>
        <dbReference type="ChEBI" id="CHEBI:30616"/>
    </ligand>
</feature>
<feature type="binding site" evidence="1">
    <location>
        <position position="176"/>
    </location>
    <ligand>
        <name>ATP</name>
        <dbReference type="ChEBI" id="CHEBI:30616"/>
    </ligand>
</feature>
<feature type="binding site" evidence="1">
    <location>
        <position position="177"/>
    </location>
    <ligand>
        <name>ATP</name>
        <dbReference type="ChEBI" id="CHEBI:30616"/>
    </ligand>
</feature>
<feature type="binding site" evidence="1">
    <location>
        <position position="178"/>
    </location>
    <ligand>
        <name>ATP</name>
        <dbReference type="ChEBI" id="CHEBI:30616"/>
    </ligand>
</feature>
<keyword id="KW-0067">ATP-binding</keyword>
<keyword id="KW-0963">Cytoplasm</keyword>
<keyword id="KW-0235">DNA replication</keyword>
<keyword id="KW-0238">DNA-binding</keyword>
<keyword id="KW-0446">Lipid-binding</keyword>
<keyword id="KW-0547">Nucleotide-binding</keyword>
<organism>
    <name type="scientific">Salmonella choleraesuis (strain SC-B67)</name>
    <dbReference type="NCBI Taxonomy" id="321314"/>
    <lineage>
        <taxon>Bacteria</taxon>
        <taxon>Pseudomonadati</taxon>
        <taxon>Pseudomonadota</taxon>
        <taxon>Gammaproteobacteria</taxon>
        <taxon>Enterobacterales</taxon>
        <taxon>Enterobacteriaceae</taxon>
        <taxon>Salmonella</taxon>
    </lineage>
</organism>
<evidence type="ECO:0000255" key="1">
    <source>
        <dbReference type="HAMAP-Rule" id="MF_00377"/>
    </source>
</evidence>
<protein>
    <recommendedName>
        <fullName evidence="1">Chromosomal replication initiator protein DnaA</fullName>
    </recommendedName>
</protein>
<gene>
    <name evidence="1" type="primary">dnaA</name>
    <name type="ordered locus">SCH_3756</name>
</gene>
<comment type="function">
    <text evidence="1">Plays an essential role in the initiation and regulation of chromosomal replication. ATP-DnaA binds to the origin of replication (oriC) to initiate formation of the DNA replication initiation complex once per cell cycle. Binds the DnaA box (a 9 base pair repeat at the origin) and separates the double-stranded (ds)DNA. Forms a right-handed helical filament on oriC DNA; dsDNA binds to the exterior of the filament while single-stranded (ss)DNA is stabiized in the filament's interior. The ATP-DnaA-oriC complex binds and stabilizes one strand of the AT-rich DNA unwinding element (DUE), permitting loading of DNA polymerase. After initiation quickly degrades to an ADP-DnaA complex that is not apt for DNA replication. Binds acidic phospholipids.</text>
</comment>
<comment type="subunit">
    <text evidence="1">Oligomerizes as a right-handed, spiral filament on DNA at oriC.</text>
</comment>
<comment type="subcellular location">
    <subcellularLocation>
        <location evidence="1">Cytoplasm</location>
    </subcellularLocation>
</comment>
<comment type="domain">
    <text evidence="1">Domain I is involved in oligomerization and binding regulators, domain II is flexibile and of varying length in different bacteria, domain III forms the AAA+ region, while domain IV binds dsDNA.</text>
</comment>
<comment type="similarity">
    <text evidence="1">Belongs to the DnaA family.</text>
</comment>
<proteinExistence type="inferred from homology"/>
<sequence length="466" mass="52654">MSLSLWQQCLARLQDELPATEFSMWIRPLQAELSDNTLALYAPNRFVLDWVRDKYLNNINGLLNTFCGADAPQLRFEVGTKPVTQTLKTPVHNVVAPTQTTTAQPQRVAPAARSGWDNVPAPAEPTYRSNVNVKHTFDNFVEGKSNQLARAAARQVADNPGGAYNPLFLYGGTGLGKTHLLHAVGNGIMARKPNAKVVYMHSERFVQDMVKALQNNAIEEFKRYYRSVDALLIDDIQFFANKERSQEEFFHTFNALLEGNQQIILTSDRYPKEINGVEDRLKSRFGWGLTVAIEPPELETRVAILMKKADENDIRLPGEVAFFIAKRLRSNVRELEGALNRVIANANFTGRAITIDFVREALRDLLALQEKLVTIDNIQKTVAEYYKIKIADLLSKRRSRSVARPRQMAMALAKELTNYSLPEIGDAFGGRDHTTVLHACRKIEQLREESHDIKEDFSNLIRTLSS</sequence>
<dbReference type="EMBL" id="AE017220">
    <property type="protein sequence ID" value="AAX67662.1"/>
    <property type="molecule type" value="Genomic_DNA"/>
</dbReference>
<dbReference type="RefSeq" id="WP_000059096.1">
    <property type="nucleotide sequence ID" value="NC_006905.1"/>
</dbReference>
<dbReference type="SMR" id="Q57I00"/>
<dbReference type="KEGG" id="sec:SCH_3756"/>
<dbReference type="HOGENOM" id="CLU_026910_0_1_6"/>
<dbReference type="Proteomes" id="UP000000538">
    <property type="component" value="Chromosome"/>
</dbReference>
<dbReference type="GO" id="GO:0005737">
    <property type="term" value="C:cytoplasm"/>
    <property type="evidence" value="ECO:0007669"/>
    <property type="project" value="UniProtKB-SubCell"/>
</dbReference>
<dbReference type="GO" id="GO:0005886">
    <property type="term" value="C:plasma membrane"/>
    <property type="evidence" value="ECO:0007669"/>
    <property type="project" value="TreeGrafter"/>
</dbReference>
<dbReference type="GO" id="GO:0005524">
    <property type="term" value="F:ATP binding"/>
    <property type="evidence" value="ECO:0007669"/>
    <property type="project" value="UniProtKB-UniRule"/>
</dbReference>
<dbReference type="GO" id="GO:0016887">
    <property type="term" value="F:ATP hydrolysis activity"/>
    <property type="evidence" value="ECO:0007669"/>
    <property type="project" value="InterPro"/>
</dbReference>
<dbReference type="GO" id="GO:0003688">
    <property type="term" value="F:DNA replication origin binding"/>
    <property type="evidence" value="ECO:0007669"/>
    <property type="project" value="UniProtKB-UniRule"/>
</dbReference>
<dbReference type="GO" id="GO:0008289">
    <property type="term" value="F:lipid binding"/>
    <property type="evidence" value="ECO:0007669"/>
    <property type="project" value="UniProtKB-KW"/>
</dbReference>
<dbReference type="GO" id="GO:0006270">
    <property type="term" value="P:DNA replication initiation"/>
    <property type="evidence" value="ECO:0007669"/>
    <property type="project" value="UniProtKB-UniRule"/>
</dbReference>
<dbReference type="GO" id="GO:0006275">
    <property type="term" value="P:regulation of DNA replication"/>
    <property type="evidence" value="ECO:0007669"/>
    <property type="project" value="UniProtKB-UniRule"/>
</dbReference>
<dbReference type="CDD" id="cd00009">
    <property type="entry name" value="AAA"/>
    <property type="match status" value="1"/>
</dbReference>
<dbReference type="CDD" id="cd06571">
    <property type="entry name" value="Bac_DnaA_C"/>
    <property type="match status" value="1"/>
</dbReference>
<dbReference type="FunFam" id="1.10.1750.10:FF:000001">
    <property type="entry name" value="Chromosomal replication initiator protein DnaA"/>
    <property type="match status" value="1"/>
</dbReference>
<dbReference type="FunFam" id="1.10.8.60:FF:000003">
    <property type="entry name" value="Chromosomal replication initiator protein DnaA"/>
    <property type="match status" value="1"/>
</dbReference>
<dbReference type="FunFam" id="3.30.300.180:FF:000001">
    <property type="entry name" value="Chromosomal replication initiator protein DnaA"/>
    <property type="match status" value="1"/>
</dbReference>
<dbReference type="FunFam" id="3.40.50.300:FF:000103">
    <property type="entry name" value="Chromosomal replication initiator protein DnaA"/>
    <property type="match status" value="1"/>
</dbReference>
<dbReference type="Gene3D" id="1.10.1750.10">
    <property type="match status" value="1"/>
</dbReference>
<dbReference type="Gene3D" id="1.10.8.60">
    <property type="match status" value="1"/>
</dbReference>
<dbReference type="Gene3D" id="3.30.300.180">
    <property type="match status" value="1"/>
</dbReference>
<dbReference type="Gene3D" id="3.40.50.300">
    <property type="entry name" value="P-loop containing nucleotide triphosphate hydrolases"/>
    <property type="match status" value="1"/>
</dbReference>
<dbReference type="HAMAP" id="MF_00377">
    <property type="entry name" value="DnaA_bact"/>
    <property type="match status" value="1"/>
</dbReference>
<dbReference type="InterPro" id="IPR003593">
    <property type="entry name" value="AAA+_ATPase"/>
</dbReference>
<dbReference type="InterPro" id="IPR001957">
    <property type="entry name" value="Chromosome_initiator_DnaA"/>
</dbReference>
<dbReference type="InterPro" id="IPR020591">
    <property type="entry name" value="Chromosome_initiator_DnaA-like"/>
</dbReference>
<dbReference type="InterPro" id="IPR018312">
    <property type="entry name" value="Chromosome_initiator_DnaA_CS"/>
</dbReference>
<dbReference type="InterPro" id="IPR013159">
    <property type="entry name" value="DnaA_C"/>
</dbReference>
<dbReference type="InterPro" id="IPR013317">
    <property type="entry name" value="DnaA_dom"/>
</dbReference>
<dbReference type="InterPro" id="IPR024633">
    <property type="entry name" value="DnaA_N_dom"/>
</dbReference>
<dbReference type="InterPro" id="IPR038454">
    <property type="entry name" value="DnaA_N_sf"/>
</dbReference>
<dbReference type="InterPro" id="IPR027417">
    <property type="entry name" value="P-loop_NTPase"/>
</dbReference>
<dbReference type="InterPro" id="IPR010921">
    <property type="entry name" value="Trp_repressor/repl_initiator"/>
</dbReference>
<dbReference type="NCBIfam" id="TIGR00362">
    <property type="entry name" value="DnaA"/>
    <property type="match status" value="1"/>
</dbReference>
<dbReference type="PANTHER" id="PTHR30050">
    <property type="entry name" value="CHROMOSOMAL REPLICATION INITIATOR PROTEIN DNAA"/>
    <property type="match status" value="1"/>
</dbReference>
<dbReference type="PANTHER" id="PTHR30050:SF2">
    <property type="entry name" value="CHROMOSOMAL REPLICATION INITIATOR PROTEIN DNAA"/>
    <property type="match status" value="1"/>
</dbReference>
<dbReference type="Pfam" id="PF00308">
    <property type="entry name" value="Bac_DnaA"/>
    <property type="match status" value="1"/>
</dbReference>
<dbReference type="Pfam" id="PF08299">
    <property type="entry name" value="Bac_DnaA_C"/>
    <property type="match status" value="1"/>
</dbReference>
<dbReference type="Pfam" id="PF11638">
    <property type="entry name" value="DnaA_N"/>
    <property type="match status" value="1"/>
</dbReference>
<dbReference type="PRINTS" id="PR00051">
    <property type="entry name" value="DNAA"/>
</dbReference>
<dbReference type="SMART" id="SM00382">
    <property type="entry name" value="AAA"/>
    <property type="match status" value="1"/>
</dbReference>
<dbReference type="SMART" id="SM00760">
    <property type="entry name" value="Bac_DnaA_C"/>
    <property type="match status" value="1"/>
</dbReference>
<dbReference type="SUPFAM" id="SSF52540">
    <property type="entry name" value="P-loop containing nucleoside triphosphate hydrolases"/>
    <property type="match status" value="1"/>
</dbReference>
<dbReference type="SUPFAM" id="SSF48295">
    <property type="entry name" value="TrpR-like"/>
    <property type="match status" value="1"/>
</dbReference>
<dbReference type="PROSITE" id="PS01008">
    <property type="entry name" value="DNAA"/>
    <property type="match status" value="1"/>
</dbReference>
<accession>Q57I00</accession>
<reference key="1">
    <citation type="journal article" date="2005" name="Nucleic Acids Res.">
        <title>The genome sequence of Salmonella enterica serovar Choleraesuis, a highly invasive and resistant zoonotic pathogen.</title>
        <authorList>
            <person name="Chiu C.-H."/>
            <person name="Tang P."/>
            <person name="Chu C."/>
            <person name="Hu S."/>
            <person name="Bao Q."/>
            <person name="Yu J."/>
            <person name="Chou Y.-Y."/>
            <person name="Wang H.-S."/>
            <person name="Lee Y.-S."/>
        </authorList>
    </citation>
    <scope>NUCLEOTIDE SEQUENCE [LARGE SCALE GENOMIC DNA]</scope>
    <source>
        <strain>SC-B67</strain>
    </source>
</reference>
<name>DNAA_SALCH</name>